<sequence length="554" mass="61245">MAYYRTPHDVTALPAWQALQQHRDAMQGFSMREAFAADGKRFEEFSLSSCGLFLDYSKNLINEQTRDLLVGLANEVGLADAIKSMFSGEIINASEGRPVLHTALRRPVGDKLSVNGVNVMPDVHKVLNQITELVGRIHDGLWRGYSEKPITDVVNIGIGGSFLGPELVSEALLPYAQRGVRCHYLANIDGSEFHELSANLRAETTLFIVSSKSFNTLETLKNATAARTWYLAQGGSEAELYRHFIAVSSNKAAAVAFGMREENIFPMWDWVGGRYSLWSAIGLPIALAIGTANFKELLSGAYTMDQHFQTAPFDKNMPVLLALLGVWYGNFWGAQAHAILPYDHYLRNITKHLQQLDMESNGKSVLQDGSPVKTDTGPVIWGGVGCNGQHAYHQLLHQGTQLIPADFIVPVVSFNPVADHHQWLYANCLSQSQALMLGKTRDEAEAELRAKGMNEDDIAKLAPHKVIPGNRPSNTLVVERISPRRLGALVAMYEHKVFVQSVIWGINAFDQWGVELGKELGKGVYQRLVGSLEDSAEDGSTQGLINYFRGRHRG</sequence>
<gene>
    <name evidence="1" type="primary">pgi</name>
    <name type="ordered locus">PSEEN4737</name>
</gene>
<reference key="1">
    <citation type="journal article" date="2006" name="Nat. Biotechnol.">
        <title>Complete genome sequence of the entomopathogenic and metabolically versatile soil bacterium Pseudomonas entomophila.</title>
        <authorList>
            <person name="Vodovar N."/>
            <person name="Vallenet D."/>
            <person name="Cruveiller S."/>
            <person name="Rouy Z."/>
            <person name="Barbe V."/>
            <person name="Acosta C."/>
            <person name="Cattolico L."/>
            <person name="Jubin C."/>
            <person name="Lajus A."/>
            <person name="Segurens B."/>
            <person name="Vacherie B."/>
            <person name="Wincker P."/>
            <person name="Weissenbach J."/>
            <person name="Lemaitre B."/>
            <person name="Medigue C."/>
            <person name="Boccard F."/>
        </authorList>
    </citation>
    <scope>NUCLEOTIDE SEQUENCE [LARGE SCALE GENOMIC DNA]</scope>
    <source>
        <strain>L48</strain>
    </source>
</reference>
<dbReference type="EC" id="5.3.1.9" evidence="1"/>
<dbReference type="EMBL" id="CT573326">
    <property type="protein sequence ID" value="CAK17396.1"/>
    <property type="molecule type" value="Genomic_DNA"/>
</dbReference>
<dbReference type="RefSeq" id="WP_011535758.1">
    <property type="nucleotide sequence ID" value="NC_008027.1"/>
</dbReference>
<dbReference type="SMR" id="Q1I4P0"/>
<dbReference type="STRING" id="384676.PSEEN4737"/>
<dbReference type="GeneID" id="32807702"/>
<dbReference type="KEGG" id="pen:PSEEN4737"/>
<dbReference type="eggNOG" id="COG0166">
    <property type="taxonomic scope" value="Bacteria"/>
</dbReference>
<dbReference type="HOGENOM" id="CLU_017947_3_1_6"/>
<dbReference type="OrthoDB" id="140919at2"/>
<dbReference type="UniPathway" id="UPA00109">
    <property type="reaction ID" value="UER00181"/>
</dbReference>
<dbReference type="UniPathway" id="UPA00138"/>
<dbReference type="Proteomes" id="UP000000658">
    <property type="component" value="Chromosome"/>
</dbReference>
<dbReference type="GO" id="GO:0005829">
    <property type="term" value="C:cytosol"/>
    <property type="evidence" value="ECO:0007669"/>
    <property type="project" value="TreeGrafter"/>
</dbReference>
<dbReference type="GO" id="GO:0097367">
    <property type="term" value="F:carbohydrate derivative binding"/>
    <property type="evidence" value="ECO:0007669"/>
    <property type="project" value="InterPro"/>
</dbReference>
<dbReference type="GO" id="GO:0004347">
    <property type="term" value="F:glucose-6-phosphate isomerase activity"/>
    <property type="evidence" value="ECO:0007669"/>
    <property type="project" value="UniProtKB-UniRule"/>
</dbReference>
<dbReference type="GO" id="GO:0048029">
    <property type="term" value="F:monosaccharide binding"/>
    <property type="evidence" value="ECO:0007669"/>
    <property type="project" value="TreeGrafter"/>
</dbReference>
<dbReference type="GO" id="GO:0006094">
    <property type="term" value="P:gluconeogenesis"/>
    <property type="evidence" value="ECO:0007669"/>
    <property type="project" value="UniProtKB-UniRule"/>
</dbReference>
<dbReference type="GO" id="GO:0051156">
    <property type="term" value="P:glucose 6-phosphate metabolic process"/>
    <property type="evidence" value="ECO:0007669"/>
    <property type="project" value="TreeGrafter"/>
</dbReference>
<dbReference type="GO" id="GO:0006096">
    <property type="term" value="P:glycolytic process"/>
    <property type="evidence" value="ECO:0007669"/>
    <property type="project" value="UniProtKB-UniRule"/>
</dbReference>
<dbReference type="CDD" id="cd05015">
    <property type="entry name" value="SIS_PGI_1"/>
    <property type="match status" value="1"/>
</dbReference>
<dbReference type="CDD" id="cd05016">
    <property type="entry name" value="SIS_PGI_2"/>
    <property type="match status" value="1"/>
</dbReference>
<dbReference type="FunFam" id="3.40.50.10490:FF:000018">
    <property type="entry name" value="Glucose-6-phosphate isomerase"/>
    <property type="match status" value="1"/>
</dbReference>
<dbReference type="Gene3D" id="1.10.1390.10">
    <property type="match status" value="1"/>
</dbReference>
<dbReference type="Gene3D" id="3.40.50.10490">
    <property type="entry name" value="Glucose-6-phosphate isomerase like protein, domain 1"/>
    <property type="match status" value="2"/>
</dbReference>
<dbReference type="HAMAP" id="MF_00473">
    <property type="entry name" value="G6P_isomerase"/>
    <property type="match status" value="1"/>
</dbReference>
<dbReference type="InterPro" id="IPR001672">
    <property type="entry name" value="G6P_Isomerase"/>
</dbReference>
<dbReference type="InterPro" id="IPR023096">
    <property type="entry name" value="G6P_Isomerase_C"/>
</dbReference>
<dbReference type="InterPro" id="IPR018189">
    <property type="entry name" value="Phosphoglucose_isomerase_CS"/>
</dbReference>
<dbReference type="InterPro" id="IPR046348">
    <property type="entry name" value="SIS_dom_sf"/>
</dbReference>
<dbReference type="InterPro" id="IPR035476">
    <property type="entry name" value="SIS_PGI_1"/>
</dbReference>
<dbReference type="InterPro" id="IPR035482">
    <property type="entry name" value="SIS_PGI_2"/>
</dbReference>
<dbReference type="NCBIfam" id="NF001211">
    <property type="entry name" value="PRK00179.1"/>
    <property type="match status" value="1"/>
</dbReference>
<dbReference type="PANTHER" id="PTHR11469">
    <property type="entry name" value="GLUCOSE-6-PHOSPHATE ISOMERASE"/>
    <property type="match status" value="1"/>
</dbReference>
<dbReference type="PANTHER" id="PTHR11469:SF1">
    <property type="entry name" value="GLUCOSE-6-PHOSPHATE ISOMERASE"/>
    <property type="match status" value="1"/>
</dbReference>
<dbReference type="Pfam" id="PF00342">
    <property type="entry name" value="PGI"/>
    <property type="match status" value="1"/>
</dbReference>
<dbReference type="PRINTS" id="PR00662">
    <property type="entry name" value="G6PISOMERASE"/>
</dbReference>
<dbReference type="SUPFAM" id="SSF53697">
    <property type="entry name" value="SIS domain"/>
    <property type="match status" value="1"/>
</dbReference>
<dbReference type="PROSITE" id="PS00765">
    <property type="entry name" value="P_GLUCOSE_ISOMERASE_1"/>
    <property type="match status" value="1"/>
</dbReference>
<dbReference type="PROSITE" id="PS00174">
    <property type="entry name" value="P_GLUCOSE_ISOMERASE_2"/>
    <property type="match status" value="1"/>
</dbReference>
<dbReference type="PROSITE" id="PS51463">
    <property type="entry name" value="P_GLUCOSE_ISOMERASE_3"/>
    <property type="match status" value="1"/>
</dbReference>
<keyword id="KW-0963">Cytoplasm</keyword>
<keyword id="KW-0312">Gluconeogenesis</keyword>
<keyword id="KW-0324">Glycolysis</keyword>
<keyword id="KW-0413">Isomerase</keyword>
<feature type="chain" id="PRO_1000014003" description="Glucose-6-phosphate isomerase">
    <location>
        <begin position="1"/>
        <end position="554"/>
    </location>
</feature>
<feature type="active site" description="Proton donor" evidence="1">
    <location>
        <position position="359"/>
    </location>
</feature>
<feature type="active site" evidence="1">
    <location>
        <position position="390"/>
    </location>
</feature>
<feature type="active site" evidence="1">
    <location>
        <position position="518"/>
    </location>
</feature>
<protein>
    <recommendedName>
        <fullName evidence="1">Glucose-6-phosphate isomerase</fullName>
        <shortName evidence="1">GPI</shortName>
        <ecNumber evidence="1">5.3.1.9</ecNumber>
    </recommendedName>
    <alternativeName>
        <fullName evidence="1">Phosphoglucose isomerase</fullName>
        <shortName evidence="1">PGI</shortName>
    </alternativeName>
    <alternativeName>
        <fullName evidence="1">Phosphohexose isomerase</fullName>
        <shortName evidence="1">PHI</shortName>
    </alternativeName>
</protein>
<name>G6PI_PSEE4</name>
<proteinExistence type="inferred from homology"/>
<evidence type="ECO:0000255" key="1">
    <source>
        <dbReference type="HAMAP-Rule" id="MF_00473"/>
    </source>
</evidence>
<comment type="function">
    <text evidence="1">Catalyzes the reversible isomerization of glucose-6-phosphate to fructose-6-phosphate.</text>
</comment>
<comment type="catalytic activity">
    <reaction evidence="1">
        <text>alpha-D-glucose 6-phosphate = beta-D-fructose 6-phosphate</text>
        <dbReference type="Rhea" id="RHEA:11816"/>
        <dbReference type="ChEBI" id="CHEBI:57634"/>
        <dbReference type="ChEBI" id="CHEBI:58225"/>
        <dbReference type="EC" id="5.3.1.9"/>
    </reaction>
</comment>
<comment type="pathway">
    <text evidence="1">Carbohydrate biosynthesis; gluconeogenesis.</text>
</comment>
<comment type="pathway">
    <text evidence="1">Carbohydrate degradation; glycolysis; D-glyceraldehyde 3-phosphate and glycerone phosphate from D-glucose: step 2/4.</text>
</comment>
<comment type="subcellular location">
    <subcellularLocation>
        <location evidence="1">Cytoplasm</location>
    </subcellularLocation>
</comment>
<comment type="similarity">
    <text evidence="1">Belongs to the GPI family.</text>
</comment>
<accession>Q1I4P0</accession>
<organism>
    <name type="scientific">Pseudomonas entomophila (strain L48)</name>
    <dbReference type="NCBI Taxonomy" id="384676"/>
    <lineage>
        <taxon>Bacteria</taxon>
        <taxon>Pseudomonadati</taxon>
        <taxon>Pseudomonadota</taxon>
        <taxon>Gammaproteobacteria</taxon>
        <taxon>Pseudomonadales</taxon>
        <taxon>Pseudomonadaceae</taxon>
        <taxon>Pseudomonas</taxon>
    </lineage>
</organism>